<protein>
    <recommendedName>
        <fullName>DNA replication licensing factor mcm2</fullName>
        <ecNumber>3.6.4.12</ecNumber>
    </recommendedName>
    <alternativeName>
        <fullName>Cell division control protein 19</fullName>
    </alternativeName>
    <alternativeName>
        <fullName>Minichromosome maintenance protein 2</fullName>
    </alternativeName>
</protein>
<sequence length="830" mass="92831">MDSFRKRGRRDSESLPFESENSSLGATPLSLPPSSPPPEFSDEAAEALVEEDIEDLDGEALDVEDEEGEDLFGEGMERDYQQNLELDRYDIEELDDDNDLEELDIGARRAVDARLRRRDIELDAAAGRTKPAAFLQDEDDDLDSNLGTGFTRHRHRIYDEYSPNVGALDESGELPLESIADVKADSIAEWVTLDPVRRTIAREFKNFLLEYTDENGTSVYGNRIRTLGEVNAESLMVNYAHLGESKPILAYFLANAPAPIFRIFDRVALEATLLHYPDYERIHSDIHVRITNLPTCFTLRDLRQSHLNCLVRVSGVVTRRTGLFPQLKYIRFTCTKCGATLGPFFQDSSVEVKISFCHNCSSRGPFVINSERTVYNNYQRITLQESPGTVPSGRLPRHREVILLADLVDVAKPGEEIDVTGIYRNNFDASLNTKNGFPVFATIIEANHISQLDGSGNTDDDFSLSRLTDDEEREIRALAKSPDIHNRIIASMAPSIYGHRSIKTAIAAALFGGVPKNINGKHKIRGDINVLLLGDPGTAKSQFLKYVEKTAHRAVFATGQGASAVGLTASVRKDPITNEWTLEGGALVLADKGVCLIDEFDKMNDQDRTSIHEAMEQQSISISKAGIVTTLQARCTIIAAANPIGGRYNTTIPFNQNVELTEPILSRFDILQVVKDTVNPEIDEQLANFVVSSHIRSHPAFDPNMDVLKKVPTETGIDAKPIPQDLLRKYIHFAREKVFPRLQQMDEEKISRLYSDMRRESLATGSYPITVRHLESAIRLSEAFAKMQLSEFVRPSHIDKAIQVIIDSFVNAQKMSVKRSLSRTFAKYLI</sequence>
<accession>P40377</accession>
<keyword id="KW-0067">ATP-binding</keyword>
<keyword id="KW-0131">Cell cycle</keyword>
<keyword id="KW-0235">DNA replication</keyword>
<keyword id="KW-0238">DNA-binding</keyword>
<keyword id="KW-0347">Helicase</keyword>
<keyword id="KW-0378">Hydrolase</keyword>
<keyword id="KW-0479">Metal-binding</keyword>
<keyword id="KW-0547">Nucleotide-binding</keyword>
<keyword id="KW-0539">Nucleus</keyword>
<keyword id="KW-1185">Reference proteome</keyword>
<keyword id="KW-0862">Zinc</keyword>
<keyword id="KW-0863">Zinc-finger</keyword>
<evidence type="ECO:0000250" key="1"/>
<evidence type="ECO:0000255" key="2"/>
<evidence type="ECO:0000256" key="3">
    <source>
        <dbReference type="SAM" id="MobiDB-lite"/>
    </source>
</evidence>
<evidence type="ECO:0000269" key="4">
    <source>
    </source>
</evidence>
<evidence type="ECO:0000305" key="5"/>
<gene>
    <name type="primary">mcm2</name>
    <name type="synonym">cdc19</name>
    <name type="synonym">nda1</name>
    <name type="ORF">SPBC4.04c</name>
</gene>
<name>MCM2_SCHPO</name>
<organism>
    <name type="scientific">Schizosaccharomyces pombe (strain 972 / ATCC 24843)</name>
    <name type="common">Fission yeast</name>
    <dbReference type="NCBI Taxonomy" id="284812"/>
    <lineage>
        <taxon>Eukaryota</taxon>
        <taxon>Fungi</taxon>
        <taxon>Dikarya</taxon>
        <taxon>Ascomycota</taxon>
        <taxon>Taphrinomycotina</taxon>
        <taxon>Schizosaccharomycetes</taxon>
        <taxon>Schizosaccharomycetales</taxon>
        <taxon>Schizosaccharomycetaceae</taxon>
        <taxon>Schizosaccharomyces</taxon>
    </lineage>
</organism>
<reference key="1">
    <citation type="journal article" date="1994" name="J. Cell Sci.">
        <title>The fission yeast cdc19+ gene encodes a member of the MCM family of replication proteins.</title>
        <authorList>
            <person name="Forsburg S.L."/>
            <person name="Nurse P."/>
        </authorList>
    </citation>
    <scope>NUCLEOTIDE SEQUENCE [GENOMIC DNA]</scope>
</reference>
<reference key="2">
    <citation type="journal article" date="1993" name="Mol. Biol. Cell">
        <title>Fission yeast genes nda1+ and nda4+, mutations of which lead to S-phase block, chromatin alteration and Ca2+ suppression, are members of the CDC46/MCM2 family.</title>
        <authorList>
            <person name="Miyake S."/>
            <person name="Okishio N."/>
            <person name="Samejima I."/>
            <person name="Hiraoka Y."/>
            <person name="Toda T."/>
            <person name="Saitoh I."/>
            <person name="Yanagida M."/>
        </authorList>
    </citation>
    <scope>NUCLEOTIDE SEQUENCE [GENOMIC DNA]</scope>
</reference>
<reference key="3">
    <citation type="journal article" date="2002" name="Nature">
        <title>The genome sequence of Schizosaccharomyces pombe.</title>
        <authorList>
            <person name="Wood V."/>
            <person name="Gwilliam R."/>
            <person name="Rajandream M.A."/>
            <person name="Lyne M.H."/>
            <person name="Lyne R."/>
            <person name="Stewart A."/>
            <person name="Sgouros J.G."/>
            <person name="Peat N."/>
            <person name="Hayles J."/>
            <person name="Baker S.G."/>
            <person name="Basham D."/>
            <person name="Bowman S."/>
            <person name="Brooks K."/>
            <person name="Brown D."/>
            <person name="Brown S."/>
            <person name="Chillingworth T."/>
            <person name="Churcher C.M."/>
            <person name="Collins M."/>
            <person name="Connor R."/>
            <person name="Cronin A."/>
            <person name="Davis P."/>
            <person name="Feltwell T."/>
            <person name="Fraser A."/>
            <person name="Gentles S."/>
            <person name="Goble A."/>
            <person name="Hamlin N."/>
            <person name="Harris D.E."/>
            <person name="Hidalgo J."/>
            <person name="Hodgson G."/>
            <person name="Holroyd S."/>
            <person name="Hornsby T."/>
            <person name="Howarth S."/>
            <person name="Huckle E.J."/>
            <person name="Hunt S."/>
            <person name="Jagels K."/>
            <person name="James K.D."/>
            <person name="Jones L."/>
            <person name="Jones M."/>
            <person name="Leather S."/>
            <person name="McDonald S."/>
            <person name="McLean J."/>
            <person name="Mooney P."/>
            <person name="Moule S."/>
            <person name="Mungall K.L."/>
            <person name="Murphy L.D."/>
            <person name="Niblett D."/>
            <person name="Odell C."/>
            <person name="Oliver K."/>
            <person name="O'Neil S."/>
            <person name="Pearson D."/>
            <person name="Quail M.A."/>
            <person name="Rabbinowitsch E."/>
            <person name="Rutherford K.M."/>
            <person name="Rutter S."/>
            <person name="Saunders D."/>
            <person name="Seeger K."/>
            <person name="Sharp S."/>
            <person name="Skelton J."/>
            <person name="Simmonds M.N."/>
            <person name="Squares R."/>
            <person name="Squares S."/>
            <person name="Stevens K."/>
            <person name="Taylor K."/>
            <person name="Taylor R.G."/>
            <person name="Tivey A."/>
            <person name="Walsh S.V."/>
            <person name="Warren T."/>
            <person name="Whitehead S."/>
            <person name="Woodward J.R."/>
            <person name="Volckaert G."/>
            <person name="Aert R."/>
            <person name="Robben J."/>
            <person name="Grymonprez B."/>
            <person name="Weltjens I."/>
            <person name="Vanstreels E."/>
            <person name="Rieger M."/>
            <person name="Schaefer M."/>
            <person name="Mueller-Auer S."/>
            <person name="Gabel C."/>
            <person name="Fuchs M."/>
            <person name="Duesterhoeft A."/>
            <person name="Fritzc C."/>
            <person name="Holzer E."/>
            <person name="Moestl D."/>
            <person name="Hilbert H."/>
            <person name="Borzym K."/>
            <person name="Langer I."/>
            <person name="Beck A."/>
            <person name="Lehrach H."/>
            <person name="Reinhardt R."/>
            <person name="Pohl T.M."/>
            <person name="Eger P."/>
            <person name="Zimmermann W."/>
            <person name="Wedler H."/>
            <person name="Wambutt R."/>
            <person name="Purnelle B."/>
            <person name="Goffeau A."/>
            <person name="Cadieu E."/>
            <person name="Dreano S."/>
            <person name="Gloux S."/>
            <person name="Lelaure V."/>
            <person name="Mottier S."/>
            <person name="Galibert F."/>
            <person name="Aves S.J."/>
            <person name="Xiang Z."/>
            <person name="Hunt C."/>
            <person name="Moore K."/>
            <person name="Hurst S.M."/>
            <person name="Lucas M."/>
            <person name="Rochet M."/>
            <person name="Gaillardin C."/>
            <person name="Tallada V.A."/>
            <person name="Garzon A."/>
            <person name="Thode G."/>
            <person name="Daga R.R."/>
            <person name="Cruzado L."/>
            <person name="Jimenez J."/>
            <person name="Sanchez M."/>
            <person name="del Rey F."/>
            <person name="Benito J."/>
            <person name="Dominguez A."/>
            <person name="Revuelta J.L."/>
            <person name="Moreno S."/>
            <person name="Armstrong J."/>
            <person name="Forsburg S.L."/>
            <person name="Cerutti L."/>
            <person name="Lowe T."/>
            <person name="McCombie W.R."/>
            <person name="Paulsen I."/>
            <person name="Potashkin J."/>
            <person name="Shpakovski G.V."/>
            <person name="Ussery D."/>
            <person name="Barrell B.G."/>
            <person name="Nurse P."/>
        </authorList>
    </citation>
    <scope>NUCLEOTIDE SEQUENCE [LARGE SCALE GENOMIC DNA]</scope>
    <source>
        <strain>972 / ATCC 24843</strain>
    </source>
</reference>
<reference key="4">
    <citation type="journal article" date="2001" name="Genetics">
        <title>Characterization of Schizosaccharomyces pombe mcm7(+) and cdc23(+) (MCM10) and interactions with replication checkpoints.</title>
        <authorList>
            <person name="Liang D.T."/>
            <person name="Forsburg S.L."/>
        </authorList>
    </citation>
    <scope>SUBUNIT</scope>
    <source>
        <strain>SP011</strain>
    </source>
</reference>
<reference key="5">
    <citation type="journal article" date="2003" name="Proc. Natl. Acad. Sci. U.S.A.">
        <title>The Cdc23 (Mcm10) protein is required for the phosphorylation of minichromosome maintenance complex by the Dfp1-Hsk1 kinase.</title>
        <authorList>
            <person name="Lee J.-K."/>
            <person name="Seo Y.-S."/>
            <person name="Hurwitz J."/>
        </authorList>
    </citation>
    <scope>MCM10</scope>
</reference>
<dbReference type="EC" id="3.6.4.12"/>
<dbReference type="EMBL" id="U08048">
    <property type="protein sequence ID" value="AAC48930.1"/>
    <property type="molecule type" value="Genomic_DNA"/>
</dbReference>
<dbReference type="EMBL" id="S68468">
    <property type="protein sequence ID" value="AAC60569.1"/>
    <property type="molecule type" value="Genomic_DNA"/>
</dbReference>
<dbReference type="EMBL" id="CU329671">
    <property type="protein sequence ID" value="CAB58403.1"/>
    <property type="molecule type" value="Genomic_DNA"/>
</dbReference>
<dbReference type="PIR" id="B48723">
    <property type="entry name" value="B48723"/>
</dbReference>
<dbReference type="RefSeq" id="NP_595477.1">
    <property type="nucleotide sequence ID" value="NM_001021388.2"/>
</dbReference>
<dbReference type="SMR" id="P40377"/>
<dbReference type="BioGRID" id="277146">
    <property type="interactions" value="38"/>
</dbReference>
<dbReference type="ComplexPortal" id="CPX-2945">
    <property type="entry name" value="MCM complex"/>
</dbReference>
<dbReference type="FunCoup" id="P40377">
    <property type="interactions" value="714"/>
</dbReference>
<dbReference type="IntAct" id="P40377">
    <property type="interactions" value="8"/>
</dbReference>
<dbReference type="MINT" id="P40377"/>
<dbReference type="STRING" id="284812.P40377"/>
<dbReference type="iPTMnet" id="P40377"/>
<dbReference type="PaxDb" id="4896-SPBC4.04c.1"/>
<dbReference type="EnsemblFungi" id="SPBC4.04c.1">
    <property type="protein sequence ID" value="SPBC4.04c.1:pep"/>
    <property type="gene ID" value="SPBC4.04c"/>
</dbReference>
<dbReference type="GeneID" id="2540620"/>
<dbReference type="KEGG" id="spo:2540620"/>
<dbReference type="PomBase" id="SPBC4.04c">
    <property type="gene designation" value="mcm2"/>
</dbReference>
<dbReference type="VEuPathDB" id="FungiDB:SPBC4.04c"/>
<dbReference type="eggNOG" id="KOG0477">
    <property type="taxonomic scope" value="Eukaryota"/>
</dbReference>
<dbReference type="HOGENOM" id="CLU_000995_0_0_1"/>
<dbReference type="InParanoid" id="P40377"/>
<dbReference type="OMA" id="TYERVTT"/>
<dbReference type="PhylomeDB" id="P40377"/>
<dbReference type="Reactome" id="R-SPO-176187">
    <property type="pathway name" value="Activation of ATR in response to replication stress"/>
</dbReference>
<dbReference type="Reactome" id="R-SPO-68867">
    <property type="pathway name" value="Assembly of the pre-replicative complex"/>
</dbReference>
<dbReference type="Reactome" id="R-SPO-68949">
    <property type="pathway name" value="Orc1 removal from chromatin"/>
</dbReference>
<dbReference type="Reactome" id="R-SPO-68962">
    <property type="pathway name" value="Activation of the pre-replicative complex"/>
</dbReference>
<dbReference type="Reactome" id="R-SPO-69052">
    <property type="pathway name" value="Switching of origins to a post-replicative state"/>
</dbReference>
<dbReference type="PRO" id="PR:P40377"/>
<dbReference type="Proteomes" id="UP000002485">
    <property type="component" value="Chromosome II"/>
</dbReference>
<dbReference type="GO" id="GO:0000785">
    <property type="term" value="C:chromatin"/>
    <property type="evidence" value="ECO:0000314"/>
    <property type="project" value="PomBase"/>
</dbReference>
<dbReference type="GO" id="GO:0140445">
    <property type="term" value="C:chromosome, telomeric repeat region"/>
    <property type="evidence" value="ECO:0000314"/>
    <property type="project" value="PomBase"/>
</dbReference>
<dbReference type="GO" id="GO:0031261">
    <property type="term" value="C:DNA replication preinitiation complex"/>
    <property type="evidence" value="ECO:0000305"/>
    <property type="project" value="PomBase"/>
</dbReference>
<dbReference type="GO" id="GO:0000792">
    <property type="term" value="C:heterochromatin"/>
    <property type="evidence" value="ECO:0000314"/>
    <property type="project" value="PomBase"/>
</dbReference>
<dbReference type="GO" id="GO:0042555">
    <property type="term" value="C:MCM complex"/>
    <property type="evidence" value="ECO:0000314"/>
    <property type="project" value="PomBase"/>
</dbReference>
<dbReference type="GO" id="GO:0005656">
    <property type="term" value="C:nuclear pre-replicative complex"/>
    <property type="evidence" value="ECO:0000305"/>
    <property type="project" value="PomBase"/>
</dbReference>
<dbReference type="GO" id="GO:0043596">
    <property type="term" value="C:nuclear replication fork"/>
    <property type="evidence" value="ECO:0000305"/>
    <property type="project" value="PomBase"/>
</dbReference>
<dbReference type="GO" id="GO:0005634">
    <property type="term" value="C:nucleus"/>
    <property type="evidence" value="ECO:0000314"/>
    <property type="project" value="PomBase"/>
</dbReference>
<dbReference type="GO" id="GO:0005524">
    <property type="term" value="F:ATP binding"/>
    <property type="evidence" value="ECO:0007669"/>
    <property type="project" value="UniProtKB-KW"/>
</dbReference>
<dbReference type="GO" id="GO:0016887">
    <property type="term" value="F:ATP hydrolysis activity"/>
    <property type="evidence" value="ECO:0007669"/>
    <property type="project" value="RHEA"/>
</dbReference>
<dbReference type="GO" id="GO:0003688">
    <property type="term" value="F:DNA replication origin binding"/>
    <property type="evidence" value="ECO:0000266"/>
    <property type="project" value="PomBase"/>
</dbReference>
<dbReference type="GO" id="GO:0000510">
    <property type="term" value="F:H3-H4 histone complex chaperone activity"/>
    <property type="evidence" value="ECO:0000269"/>
    <property type="project" value="PomBase"/>
</dbReference>
<dbReference type="GO" id="GO:0004386">
    <property type="term" value="F:helicase activity"/>
    <property type="evidence" value="ECO:0007669"/>
    <property type="project" value="UniProtKB-KW"/>
</dbReference>
<dbReference type="GO" id="GO:0031491">
    <property type="term" value="F:nucleosome binding"/>
    <property type="evidence" value="ECO:0000269"/>
    <property type="project" value="PomBase"/>
</dbReference>
<dbReference type="GO" id="GO:0003697">
    <property type="term" value="F:single-stranded DNA binding"/>
    <property type="evidence" value="ECO:0000318"/>
    <property type="project" value="GO_Central"/>
</dbReference>
<dbReference type="GO" id="GO:0008270">
    <property type="term" value="F:zinc ion binding"/>
    <property type="evidence" value="ECO:0007669"/>
    <property type="project" value="UniProtKB-KW"/>
</dbReference>
<dbReference type="GO" id="GO:0006260">
    <property type="term" value="P:DNA replication"/>
    <property type="evidence" value="ECO:0000318"/>
    <property type="project" value="GO_Central"/>
</dbReference>
<dbReference type="GO" id="GO:0006335">
    <property type="term" value="P:DNA replication-dependent chromatin assembly"/>
    <property type="evidence" value="ECO:0000314"/>
    <property type="project" value="PomBase"/>
</dbReference>
<dbReference type="GO" id="GO:0000727">
    <property type="term" value="P:double-strand break repair via break-induced replication"/>
    <property type="evidence" value="ECO:0000318"/>
    <property type="project" value="GO_Central"/>
</dbReference>
<dbReference type="GO" id="GO:1902975">
    <property type="term" value="P:mitotic DNA replication initiation"/>
    <property type="evidence" value="ECO:0000318"/>
    <property type="project" value="GO_Central"/>
</dbReference>
<dbReference type="GO" id="GO:0006279">
    <property type="term" value="P:premeiotic DNA replication"/>
    <property type="evidence" value="ECO:0000314"/>
    <property type="project" value="ComplexPortal"/>
</dbReference>
<dbReference type="CDD" id="cd17753">
    <property type="entry name" value="MCM2"/>
    <property type="match status" value="1"/>
</dbReference>
<dbReference type="FunFam" id="2.20.28.10:FF:000002">
    <property type="entry name" value="DNA helicase"/>
    <property type="match status" value="1"/>
</dbReference>
<dbReference type="FunFam" id="3.30.1640.10:FF:000003">
    <property type="entry name" value="DNA helicase"/>
    <property type="match status" value="1"/>
</dbReference>
<dbReference type="FunFam" id="3.40.50.300:FF:000138">
    <property type="entry name" value="DNA helicase"/>
    <property type="match status" value="1"/>
</dbReference>
<dbReference type="Gene3D" id="2.20.28.10">
    <property type="match status" value="1"/>
</dbReference>
<dbReference type="Gene3D" id="3.30.1640.10">
    <property type="entry name" value="mini-chromosome maintenance (MCM) complex, chain A, domain 1"/>
    <property type="match status" value="1"/>
</dbReference>
<dbReference type="Gene3D" id="2.40.50.140">
    <property type="entry name" value="Nucleic acid-binding proteins"/>
    <property type="match status" value="1"/>
</dbReference>
<dbReference type="Gene3D" id="3.40.50.300">
    <property type="entry name" value="P-loop containing nucleotide triphosphate hydrolases"/>
    <property type="match status" value="1"/>
</dbReference>
<dbReference type="InterPro" id="IPR031327">
    <property type="entry name" value="MCM"/>
</dbReference>
<dbReference type="InterPro" id="IPR008045">
    <property type="entry name" value="MCM2"/>
</dbReference>
<dbReference type="InterPro" id="IPR018525">
    <property type="entry name" value="MCM_CS"/>
</dbReference>
<dbReference type="InterPro" id="IPR001208">
    <property type="entry name" value="MCM_dom"/>
</dbReference>
<dbReference type="InterPro" id="IPR041562">
    <property type="entry name" value="MCM_lid"/>
</dbReference>
<dbReference type="InterPro" id="IPR027925">
    <property type="entry name" value="MCM_N"/>
</dbReference>
<dbReference type="InterPro" id="IPR033762">
    <property type="entry name" value="MCM_OB"/>
</dbReference>
<dbReference type="InterPro" id="IPR012340">
    <property type="entry name" value="NA-bd_OB-fold"/>
</dbReference>
<dbReference type="InterPro" id="IPR027417">
    <property type="entry name" value="P-loop_NTPase"/>
</dbReference>
<dbReference type="PANTHER" id="PTHR11630">
    <property type="entry name" value="DNA REPLICATION LICENSING FACTOR MCM FAMILY MEMBER"/>
    <property type="match status" value="1"/>
</dbReference>
<dbReference type="PANTHER" id="PTHR11630:SF44">
    <property type="entry name" value="DNA REPLICATION LICENSING FACTOR MCM2"/>
    <property type="match status" value="1"/>
</dbReference>
<dbReference type="Pfam" id="PF00493">
    <property type="entry name" value="MCM"/>
    <property type="match status" value="1"/>
</dbReference>
<dbReference type="Pfam" id="PF12619">
    <property type="entry name" value="MCM2_N"/>
    <property type="match status" value="1"/>
</dbReference>
<dbReference type="Pfam" id="PF17855">
    <property type="entry name" value="MCM_lid"/>
    <property type="match status" value="1"/>
</dbReference>
<dbReference type="Pfam" id="PF14551">
    <property type="entry name" value="MCM_N"/>
    <property type="match status" value="1"/>
</dbReference>
<dbReference type="Pfam" id="PF17207">
    <property type="entry name" value="MCM_OB"/>
    <property type="match status" value="1"/>
</dbReference>
<dbReference type="PRINTS" id="PR01657">
    <property type="entry name" value="MCMFAMILY"/>
</dbReference>
<dbReference type="PRINTS" id="PR01658">
    <property type="entry name" value="MCMPROTEIN2"/>
</dbReference>
<dbReference type="SMART" id="SM00350">
    <property type="entry name" value="MCM"/>
    <property type="match status" value="1"/>
</dbReference>
<dbReference type="SUPFAM" id="SSF50249">
    <property type="entry name" value="Nucleic acid-binding proteins"/>
    <property type="match status" value="1"/>
</dbReference>
<dbReference type="SUPFAM" id="SSF52540">
    <property type="entry name" value="P-loop containing nucleoside triphosphate hydrolases"/>
    <property type="match status" value="1"/>
</dbReference>
<dbReference type="PROSITE" id="PS00847">
    <property type="entry name" value="MCM_1"/>
    <property type="match status" value="1"/>
</dbReference>
<dbReference type="PROSITE" id="PS50051">
    <property type="entry name" value="MCM_2"/>
    <property type="match status" value="1"/>
</dbReference>
<feature type="chain" id="PRO_0000194092" description="DNA replication licensing factor mcm2">
    <location>
        <begin position="1"/>
        <end position="830"/>
    </location>
</feature>
<feature type="domain" description="MCM">
    <location>
        <begin position="484"/>
        <end position="691"/>
    </location>
</feature>
<feature type="zinc finger region" description="C4-type" evidence="2">
    <location>
        <begin position="334"/>
        <end position="360"/>
    </location>
</feature>
<feature type="region of interest" description="Disordered" evidence="3">
    <location>
        <begin position="1"/>
        <end position="45"/>
    </location>
</feature>
<feature type="short sequence motif" description="Arginine finger">
    <location>
        <begin position="666"/>
        <end position="669"/>
    </location>
</feature>
<feature type="compositionally biased region" description="Pro residues" evidence="3">
    <location>
        <begin position="30"/>
        <end position="39"/>
    </location>
</feature>
<feature type="binding site" evidence="2">
    <location>
        <begin position="534"/>
        <end position="541"/>
    </location>
    <ligand>
        <name>ATP</name>
        <dbReference type="ChEBI" id="CHEBI:30616"/>
    </ligand>
</feature>
<proteinExistence type="evidence at protein level"/>
<comment type="function">
    <text evidence="1">Acts as a component of the mcm2-7 complex (mcm complex) which is the putative replicative helicase essential for 'once per cell cycle' DNA replication initiation and elongation in eukaryotic cells. The active ATPase sites in the mcm2-7 ring are formed through the interaction surfaces of two neighboring subunits such that a critical structure of a conserved arginine finger motif is provided in trans relative to the ATP-binding site of the Walker A box of the adjacent subunit. The six ATPase active sites, however, are likely to contribute differentially to the complex helicase activity (By similarity). Plays an important role in DNA replication.</text>
</comment>
<comment type="catalytic activity">
    <reaction>
        <text>ATP + H2O = ADP + phosphate + H(+)</text>
        <dbReference type="Rhea" id="RHEA:13065"/>
        <dbReference type="ChEBI" id="CHEBI:15377"/>
        <dbReference type="ChEBI" id="CHEBI:15378"/>
        <dbReference type="ChEBI" id="CHEBI:30616"/>
        <dbReference type="ChEBI" id="CHEBI:43474"/>
        <dbReference type="ChEBI" id="CHEBI:456216"/>
        <dbReference type="EC" id="3.6.4.12"/>
    </reaction>
</comment>
<comment type="subunit">
    <text evidence="4 5">Component of the mcm2-7 complex. The complex forms a toroidal hexameric ring with the proposed subunit order mcm2-mcm6-mcm4-mcm7-mcm3-mcm5 (Probable). The heterodimers of mcm4/mcm6 and mcm3/mcm5 interact with mcm2 and mcm7. Interacts with mcm10.</text>
</comment>
<comment type="interaction">
    <interactant intactId="EBI-783248">
        <id>P40377</id>
    </interactant>
    <interactant intactId="EBI-908476">
        <id>P50582</id>
        <label>hsk1</label>
    </interactant>
    <organismsDiffer>false</organismsDiffer>
    <experiments>2</experiments>
</comment>
<comment type="subcellular location">
    <subcellularLocation>
        <location evidence="5">Nucleus</location>
    </subcellularLocation>
</comment>
<comment type="similarity">
    <text evidence="5">Belongs to the MCM family.</text>
</comment>